<dbReference type="EC" id="2.1.1.144" evidence="1"/>
<dbReference type="EMBL" id="CP000884">
    <property type="protein sequence ID" value="ABX35068.1"/>
    <property type="molecule type" value="Genomic_DNA"/>
</dbReference>
<dbReference type="RefSeq" id="WP_012204350.1">
    <property type="nucleotide sequence ID" value="NC_010002.1"/>
</dbReference>
<dbReference type="SMR" id="A9BVK1"/>
<dbReference type="STRING" id="398578.Daci_2430"/>
<dbReference type="GeneID" id="24119108"/>
<dbReference type="KEGG" id="dac:Daci_2430"/>
<dbReference type="eggNOG" id="COG4106">
    <property type="taxonomic scope" value="Bacteria"/>
</dbReference>
<dbReference type="HOGENOM" id="CLU_037990_5_2_4"/>
<dbReference type="Proteomes" id="UP000000784">
    <property type="component" value="Chromosome"/>
</dbReference>
<dbReference type="GO" id="GO:0005737">
    <property type="term" value="C:cytoplasm"/>
    <property type="evidence" value="ECO:0007669"/>
    <property type="project" value="UniProtKB-SubCell"/>
</dbReference>
<dbReference type="GO" id="GO:0030798">
    <property type="term" value="F:trans-aconitate 2-methyltransferase activity"/>
    <property type="evidence" value="ECO:0007669"/>
    <property type="project" value="UniProtKB-UniRule"/>
</dbReference>
<dbReference type="GO" id="GO:0032259">
    <property type="term" value="P:methylation"/>
    <property type="evidence" value="ECO:0007669"/>
    <property type="project" value="UniProtKB-KW"/>
</dbReference>
<dbReference type="CDD" id="cd02440">
    <property type="entry name" value="AdoMet_MTases"/>
    <property type="match status" value="1"/>
</dbReference>
<dbReference type="Gene3D" id="1.10.150.290">
    <property type="entry name" value="S-adenosyl-L-methionine-dependent methyltransferases"/>
    <property type="match status" value="1"/>
</dbReference>
<dbReference type="Gene3D" id="3.40.50.150">
    <property type="entry name" value="Vaccinia Virus protein VP39"/>
    <property type="match status" value="1"/>
</dbReference>
<dbReference type="HAMAP" id="MF_00560">
    <property type="entry name" value="Tran_acon_Me_trans"/>
    <property type="match status" value="1"/>
</dbReference>
<dbReference type="InterPro" id="IPR041698">
    <property type="entry name" value="Methyltransf_25"/>
</dbReference>
<dbReference type="InterPro" id="IPR029063">
    <property type="entry name" value="SAM-dependent_MTases_sf"/>
</dbReference>
<dbReference type="InterPro" id="IPR023506">
    <property type="entry name" value="Trans-aconitate_MeTrfase"/>
</dbReference>
<dbReference type="InterPro" id="IPR023149">
    <property type="entry name" value="Trans_acon_MeTrfase_C"/>
</dbReference>
<dbReference type="NCBIfam" id="NF002463">
    <property type="entry name" value="PRK01683.1"/>
    <property type="match status" value="1"/>
</dbReference>
<dbReference type="PANTHER" id="PTHR43861:SF1">
    <property type="entry name" value="TRANS-ACONITATE 2-METHYLTRANSFERASE"/>
    <property type="match status" value="1"/>
</dbReference>
<dbReference type="PANTHER" id="PTHR43861">
    <property type="entry name" value="TRANS-ACONITATE 2-METHYLTRANSFERASE-RELATED"/>
    <property type="match status" value="1"/>
</dbReference>
<dbReference type="Pfam" id="PF13649">
    <property type="entry name" value="Methyltransf_25"/>
    <property type="match status" value="1"/>
</dbReference>
<dbReference type="SUPFAM" id="SSF53335">
    <property type="entry name" value="S-adenosyl-L-methionine-dependent methyltransferases"/>
    <property type="match status" value="1"/>
</dbReference>
<evidence type="ECO:0000255" key="1">
    <source>
        <dbReference type="HAMAP-Rule" id="MF_00560"/>
    </source>
</evidence>
<comment type="function">
    <text evidence="1">Catalyzes the S-adenosylmethionine monomethyl esterification of trans-aconitate.</text>
</comment>
<comment type="catalytic activity">
    <reaction evidence="1">
        <text>trans-aconitate + S-adenosyl-L-methionine = (E)-3-(methoxycarbonyl)pent-2-enedioate + S-adenosyl-L-homocysteine</text>
        <dbReference type="Rhea" id="RHEA:14969"/>
        <dbReference type="ChEBI" id="CHEBI:15708"/>
        <dbReference type="ChEBI" id="CHEBI:57470"/>
        <dbReference type="ChEBI" id="CHEBI:57856"/>
        <dbReference type="ChEBI" id="CHEBI:59789"/>
        <dbReference type="EC" id="2.1.1.144"/>
    </reaction>
</comment>
<comment type="subcellular location">
    <subcellularLocation>
        <location evidence="1">Cytoplasm</location>
    </subcellularLocation>
</comment>
<comment type="similarity">
    <text evidence="1">Belongs to the methyltransferase superfamily. Tam family.</text>
</comment>
<keyword id="KW-0963">Cytoplasm</keyword>
<keyword id="KW-0489">Methyltransferase</keyword>
<keyword id="KW-1185">Reference proteome</keyword>
<keyword id="KW-0949">S-adenosyl-L-methionine</keyword>
<keyword id="KW-0808">Transferase</keyword>
<reference key="1">
    <citation type="submission" date="2007-11" db="EMBL/GenBank/DDBJ databases">
        <title>Complete sequence of Delftia acidovorans DSM 14801 / SPH-1.</title>
        <authorList>
            <person name="Copeland A."/>
            <person name="Lucas S."/>
            <person name="Lapidus A."/>
            <person name="Barry K."/>
            <person name="Glavina del Rio T."/>
            <person name="Dalin E."/>
            <person name="Tice H."/>
            <person name="Pitluck S."/>
            <person name="Lowry S."/>
            <person name="Clum A."/>
            <person name="Schmutz J."/>
            <person name="Larimer F."/>
            <person name="Land M."/>
            <person name="Hauser L."/>
            <person name="Kyrpides N."/>
            <person name="Kim E."/>
            <person name="Schleheck D."/>
            <person name="Richardson P."/>
        </authorList>
    </citation>
    <scope>NUCLEOTIDE SEQUENCE [LARGE SCALE GENOMIC DNA]</scope>
    <source>
        <strain>DSM 14801 / SPH-1</strain>
    </source>
</reference>
<organism>
    <name type="scientific">Delftia acidovorans (strain DSM 14801 / SPH-1)</name>
    <dbReference type="NCBI Taxonomy" id="398578"/>
    <lineage>
        <taxon>Bacteria</taxon>
        <taxon>Pseudomonadati</taxon>
        <taxon>Pseudomonadota</taxon>
        <taxon>Betaproteobacteria</taxon>
        <taxon>Burkholderiales</taxon>
        <taxon>Comamonadaceae</taxon>
        <taxon>Delftia</taxon>
    </lineage>
</organism>
<feature type="chain" id="PRO_1000129249" description="Trans-aconitate 2-methyltransferase">
    <location>
        <begin position="1"/>
        <end position="268"/>
    </location>
</feature>
<sequence length="268" mass="29344">MLDWNPALYLRFANERTRPAAELLARVPLAQARHVVDLGCGPGNSTELLAQRYAGATITGIDNSQAMLATARQHLPEARFTLADIASWTPAPGESAPDLIYANASLQWVGEHETLIPRLFAQLAPGGVLAIQMPDNRQEATHRVMREIASLPKFAAYIGDAAKVRADILPIRSYYDLLAGPQEQAGVEAGAVDVWHTVYQHPMDSAGAIVQWLRGTGLKPFVEGLPEALQADFLTEYENRVDAAYGVRADGRRLLAFPRLFIVAQRKP</sequence>
<proteinExistence type="inferred from homology"/>
<gene>
    <name evidence="1" type="primary">tam</name>
    <name type="ordered locus">Daci_2430</name>
</gene>
<protein>
    <recommendedName>
        <fullName evidence="1">Trans-aconitate 2-methyltransferase</fullName>
        <ecNumber evidence="1">2.1.1.144</ecNumber>
    </recommendedName>
</protein>
<accession>A9BVK1</accession>
<name>TAM_DELAS</name>